<name>DEOC_BREBN</name>
<reference key="1">
    <citation type="submission" date="2005-03" db="EMBL/GenBank/DDBJ databases">
        <title>Brevibacillus brevis strain 47, complete genome.</title>
        <authorList>
            <person name="Hosoyama A."/>
            <person name="Yamada R."/>
            <person name="Hongo Y."/>
            <person name="Terui Y."/>
            <person name="Ankai A."/>
            <person name="Masuyama W."/>
            <person name="Sekiguchi M."/>
            <person name="Takeda T."/>
            <person name="Asano K."/>
            <person name="Ohji S."/>
            <person name="Ichikawa N."/>
            <person name="Narita S."/>
            <person name="Aoki N."/>
            <person name="Miura H."/>
            <person name="Matsushita S."/>
            <person name="Sekigawa T."/>
            <person name="Yamagata H."/>
            <person name="Yoshikawa H."/>
            <person name="Udaka S."/>
            <person name="Tanikawa S."/>
            <person name="Fujita N."/>
        </authorList>
    </citation>
    <scope>NUCLEOTIDE SEQUENCE [LARGE SCALE GENOMIC DNA]</scope>
    <source>
        <strain>47 / JCM 6285 / NBRC 100599</strain>
    </source>
</reference>
<sequence length="221" mass="23020">MNMNKYIDHTLLKPDATQEMIDKLCQEAREHDFMSVCVNPYWVKRSAELLAGSDVKVCTVIGFPLGASTIESKAAETRDAIANGATEVDMVLNVGALKSGDLETVKKDIAAVKQAAGDILLKVILETCLLTEEEKVVACKLSVEAGADYVKTSTGFSTGGATVEDIALMRKTVGPNVGVKASGGVRDGETAVAMIEAGASRIGTSSGVSIVTGAKTTGSGY</sequence>
<evidence type="ECO:0000255" key="1">
    <source>
        <dbReference type="HAMAP-Rule" id="MF_00114"/>
    </source>
</evidence>
<accession>C0ZB54</accession>
<comment type="function">
    <text evidence="1">Catalyzes a reversible aldol reaction between acetaldehyde and D-glyceraldehyde 3-phosphate to generate 2-deoxy-D-ribose 5-phosphate.</text>
</comment>
<comment type="catalytic activity">
    <reaction evidence="1">
        <text>2-deoxy-D-ribose 5-phosphate = D-glyceraldehyde 3-phosphate + acetaldehyde</text>
        <dbReference type="Rhea" id="RHEA:12821"/>
        <dbReference type="ChEBI" id="CHEBI:15343"/>
        <dbReference type="ChEBI" id="CHEBI:59776"/>
        <dbReference type="ChEBI" id="CHEBI:62877"/>
        <dbReference type="EC" id="4.1.2.4"/>
    </reaction>
</comment>
<comment type="pathway">
    <text evidence="1">Carbohydrate degradation; 2-deoxy-D-ribose 1-phosphate degradation; D-glyceraldehyde 3-phosphate and acetaldehyde from 2-deoxy-alpha-D-ribose 1-phosphate: step 2/2.</text>
</comment>
<comment type="subcellular location">
    <subcellularLocation>
        <location evidence="1">Cytoplasm</location>
    </subcellularLocation>
</comment>
<comment type="similarity">
    <text evidence="1">Belongs to the DeoC/FbaB aldolase family. DeoC type 1 subfamily.</text>
</comment>
<organism>
    <name type="scientific">Brevibacillus brevis (strain 47 / JCM 6285 / NBRC 100599)</name>
    <dbReference type="NCBI Taxonomy" id="358681"/>
    <lineage>
        <taxon>Bacteria</taxon>
        <taxon>Bacillati</taxon>
        <taxon>Bacillota</taxon>
        <taxon>Bacilli</taxon>
        <taxon>Bacillales</taxon>
        <taxon>Paenibacillaceae</taxon>
        <taxon>Brevibacillus</taxon>
    </lineage>
</organism>
<protein>
    <recommendedName>
        <fullName evidence="1">Deoxyribose-phosphate aldolase</fullName>
        <shortName evidence="1">DERA</shortName>
        <ecNumber evidence="1">4.1.2.4</ecNumber>
    </recommendedName>
    <alternativeName>
        <fullName evidence="1">2-deoxy-D-ribose 5-phosphate aldolase</fullName>
    </alternativeName>
    <alternativeName>
        <fullName evidence="1">Phosphodeoxyriboaldolase</fullName>
        <shortName evidence="1">Deoxyriboaldolase</shortName>
    </alternativeName>
</protein>
<keyword id="KW-0963">Cytoplasm</keyword>
<keyword id="KW-0456">Lyase</keyword>
<keyword id="KW-1185">Reference proteome</keyword>
<keyword id="KW-0704">Schiff base</keyword>
<gene>
    <name evidence="1" type="primary">deoC</name>
    <name type="ordered locus">BBR47_20360</name>
</gene>
<proteinExistence type="inferred from homology"/>
<feature type="chain" id="PRO_1000119171" description="Deoxyribose-phosphate aldolase">
    <location>
        <begin position="1"/>
        <end position="221"/>
    </location>
</feature>
<feature type="active site" description="Proton donor/acceptor" evidence="1">
    <location>
        <position position="89"/>
    </location>
</feature>
<feature type="active site" description="Schiff-base intermediate with acetaldehyde" evidence="1">
    <location>
        <position position="151"/>
    </location>
</feature>
<feature type="active site" description="Proton donor/acceptor" evidence="1">
    <location>
        <position position="180"/>
    </location>
</feature>
<dbReference type="EC" id="4.1.2.4" evidence="1"/>
<dbReference type="EMBL" id="AP008955">
    <property type="protein sequence ID" value="BAH43013.1"/>
    <property type="molecule type" value="Genomic_DNA"/>
</dbReference>
<dbReference type="RefSeq" id="WP_012685746.1">
    <property type="nucleotide sequence ID" value="NC_012491.1"/>
</dbReference>
<dbReference type="SMR" id="C0ZB54"/>
<dbReference type="STRING" id="358681.BBR47_20360"/>
<dbReference type="KEGG" id="bbe:BBR47_20360"/>
<dbReference type="eggNOG" id="COG0274">
    <property type="taxonomic scope" value="Bacteria"/>
</dbReference>
<dbReference type="HOGENOM" id="CLU_053595_0_1_9"/>
<dbReference type="UniPathway" id="UPA00002">
    <property type="reaction ID" value="UER00468"/>
</dbReference>
<dbReference type="Proteomes" id="UP000001877">
    <property type="component" value="Chromosome"/>
</dbReference>
<dbReference type="GO" id="GO:0005737">
    <property type="term" value="C:cytoplasm"/>
    <property type="evidence" value="ECO:0007669"/>
    <property type="project" value="UniProtKB-SubCell"/>
</dbReference>
<dbReference type="GO" id="GO:0004139">
    <property type="term" value="F:deoxyribose-phosphate aldolase activity"/>
    <property type="evidence" value="ECO:0007669"/>
    <property type="project" value="UniProtKB-UniRule"/>
</dbReference>
<dbReference type="GO" id="GO:0006018">
    <property type="term" value="P:2-deoxyribose 1-phosphate catabolic process"/>
    <property type="evidence" value="ECO:0007669"/>
    <property type="project" value="UniProtKB-UniRule"/>
</dbReference>
<dbReference type="GO" id="GO:0016052">
    <property type="term" value="P:carbohydrate catabolic process"/>
    <property type="evidence" value="ECO:0007669"/>
    <property type="project" value="TreeGrafter"/>
</dbReference>
<dbReference type="GO" id="GO:0009264">
    <property type="term" value="P:deoxyribonucleotide catabolic process"/>
    <property type="evidence" value="ECO:0007669"/>
    <property type="project" value="InterPro"/>
</dbReference>
<dbReference type="CDD" id="cd00959">
    <property type="entry name" value="DeoC"/>
    <property type="match status" value="1"/>
</dbReference>
<dbReference type="FunFam" id="3.20.20.70:FF:000044">
    <property type="entry name" value="Deoxyribose-phosphate aldolase"/>
    <property type="match status" value="1"/>
</dbReference>
<dbReference type="Gene3D" id="3.20.20.70">
    <property type="entry name" value="Aldolase class I"/>
    <property type="match status" value="1"/>
</dbReference>
<dbReference type="HAMAP" id="MF_00114">
    <property type="entry name" value="DeoC_type1"/>
    <property type="match status" value="1"/>
</dbReference>
<dbReference type="InterPro" id="IPR013785">
    <property type="entry name" value="Aldolase_TIM"/>
</dbReference>
<dbReference type="InterPro" id="IPR011343">
    <property type="entry name" value="DeoC"/>
</dbReference>
<dbReference type="InterPro" id="IPR002915">
    <property type="entry name" value="DeoC/FbaB/LacD_aldolase"/>
</dbReference>
<dbReference type="InterPro" id="IPR028581">
    <property type="entry name" value="DeoC_typeI"/>
</dbReference>
<dbReference type="NCBIfam" id="TIGR00126">
    <property type="entry name" value="deoC"/>
    <property type="match status" value="1"/>
</dbReference>
<dbReference type="PANTHER" id="PTHR10889">
    <property type="entry name" value="DEOXYRIBOSE-PHOSPHATE ALDOLASE"/>
    <property type="match status" value="1"/>
</dbReference>
<dbReference type="PANTHER" id="PTHR10889:SF1">
    <property type="entry name" value="DEOXYRIBOSE-PHOSPHATE ALDOLASE"/>
    <property type="match status" value="1"/>
</dbReference>
<dbReference type="Pfam" id="PF01791">
    <property type="entry name" value="DeoC"/>
    <property type="match status" value="1"/>
</dbReference>
<dbReference type="PIRSF" id="PIRSF001357">
    <property type="entry name" value="DeoC"/>
    <property type="match status" value="1"/>
</dbReference>
<dbReference type="SMART" id="SM01133">
    <property type="entry name" value="DeoC"/>
    <property type="match status" value="1"/>
</dbReference>
<dbReference type="SUPFAM" id="SSF51569">
    <property type="entry name" value="Aldolase"/>
    <property type="match status" value="1"/>
</dbReference>